<gene>
    <name evidence="1" type="primary">cbiD</name>
    <name type="ordered locus">P9303_00441</name>
</gene>
<proteinExistence type="inferred from homology"/>
<sequence>MTLPVWVAAAARAATEALLGRPFSAFQLLELPDRDEPFAVSVTSAAVLAGGEQALSISHCDPGPGLDLTRGLEIWVCVQWQELVVGVDDELNVHSEAWLNLVAGKGVGTLGSGGEACVSRFARELLSRNLYPLVPSGRGLRLEVVLPRGRDLAARTSNAAFGVVDGLALIGTQADVQVSASPDQLQQTIEQLRRQSAASDFCGAMTLVIGENGLDLARQLGLAVQPLLKIGNWLGPVIVAAAEAGVEQLLLLGYHGKLVKLAGGIFHTHHHLADGRLEVLAAMAVREGLPLDLIRQLGQADSMEAALKMLEAQDPELVRKLWYRLAATVEHRSAAYLARYGSWSIAIGAALFDRQRRLRWAGPQGSQQLAVLGVTPEDSPISLSLP</sequence>
<comment type="function">
    <text evidence="1">Catalyzes the methylation of C-1 in cobalt-precorrin-5B to form cobalt-precorrin-6A.</text>
</comment>
<comment type="catalytic activity">
    <reaction evidence="1">
        <text>Co-precorrin-5B + S-adenosyl-L-methionine = Co-precorrin-6A + S-adenosyl-L-homocysteine</text>
        <dbReference type="Rhea" id="RHEA:26285"/>
        <dbReference type="ChEBI" id="CHEBI:57856"/>
        <dbReference type="ChEBI" id="CHEBI:59789"/>
        <dbReference type="ChEBI" id="CHEBI:60063"/>
        <dbReference type="ChEBI" id="CHEBI:60064"/>
        <dbReference type="EC" id="2.1.1.195"/>
    </reaction>
</comment>
<comment type="pathway">
    <text evidence="1">Cofactor biosynthesis; adenosylcobalamin biosynthesis; cob(II)yrinate a,c-diamide from sirohydrochlorin (anaerobic route): step 6/10.</text>
</comment>
<comment type="similarity">
    <text evidence="1">Belongs to the CbiD family.</text>
</comment>
<feature type="chain" id="PRO_1000046872" description="Cobalt-precorrin-5B C(1)-methyltransferase">
    <location>
        <begin position="1"/>
        <end position="386"/>
    </location>
</feature>
<reference key="1">
    <citation type="journal article" date="2007" name="PLoS Genet.">
        <title>Patterns and implications of gene gain and loss in the evolution of Prochlorococcus.</title>
        <authorList>
            <person name="Kettler G.C."/>
            <person name="Martiny A.C."/>
            <person name="Huang K."/>
            <person name="Zucker J."/>
            <person name="Coleman M.L."/>
            <person name="Rodrigue S."/>
            <person name="Chen F."/>
            <person name="Lapidus A."/>
            <person name="Ferriera S."/>
            <person name="Johnson J."/>
            <person name="Steglich C."/>
            <person name="Church G.M."/>
            <person name="Richardson P."/>
            <person name="Chisholm S.W."/>
        </authorList>
    </citation>
    <scope>NUCLEOTIDE SEQUENCE [LARGE SCALE GENOMIC DNA]</scope>
    <source>
        <strain>MIT 9303</strain>
    </source>
</reference>
<dbReference type="EC" id="2.1.1.195" evidence="1"/>
<dbReference type="EMBL" id="CP000554">
    <property type="protein sequence ID" value="ABM76801.1"/>
    <property type="molecule type" value="Genomic_DNA"/>
</dbReference>
<dbReference type="RefSeq" id="WP_011824734.1">
    <property type="nucleotide sequence ID" value="NC_008820.1"/>
</dbReference>
<dbReference type="SMR" id="A2C5P1"/>
<dbReference type="STRING" id="59922.P9303_00441"/>
<dbReference type="KEGG" id="pmf:P9303_00441"/>
<dbReference type="HOGENOM" id="CLU_041273_1_2_3"/>
<dbReference type="BioCyc" id="PMAR59922:G1G80-47-MONOMER"/>
<dbReference type="UniPathway" id="UPA00148">
    <property type="reaction ID" value="UER00227"/>
</dbReference>
<dbReference type="Proteomes" id="UP000002274">
    <property type="component" value="Chromosome"/>
</dbReference>
<dbReference type="GO" id="GO:0043780">
    <property type="term" value="F:cobalt-precorrin-5B C1-methyltransferase activity"/>
    <property type="evidence" value="ECO:0007669"/>
    <property type="project" value="RHEA"/>
</dbReference>
<dbReference type="GO" id="GO:0019251">
    <property type="term" value="P:anaerobic cobalamin biosynthetic process"/>
    <property type="evidence" value="ECO:0007669"/>
    <property type="project" value="UniProtKB-UniRule"/>
</dbReference>
<dbReference type="GO" id="GO:0032259">
    <property type="term" value="P:methylation"/>
    <property type="evidence" value="ECO:0007669"/>
    <property type="project" value="UniProtKB-KW"/>
</dbReference>
<dbReference type="Gene3D" id="3.30.2110.10">
    <property type="entry name" value="CbiD-like"/>
    <property type="match status" value="1"/>
</dbReference>
<dbReference type="HAMAP" id="MF_00787">
    <property type="entry name" value="CbiD"/>
    <property type="match status" value="1"/>
</dbReference>
<dbReference type="InterPro" id="IPR002748">
    <property type="entry name" value="CbiD"/>
</dbReference>
<dbReference type="InterPro" id="IPR036074">
    <property type="entry name" value="CbiD_sf"/>
</dbReference>
<dbReference type="NCBIfam" id="TIGR00312">
    <property type="entry name" value="cbiD"/>
    <property type="match status" value="1"/>
</dbReference>
<dbReference type="PANTHER" id="PTHR35863">
    <property type="entry name" value="COBALT-PRECORRIN-5B C(1)-METHYLTRANSFERASE"/>
    <property type="match status" value="1"/>
</dbReference>
<dbReference type="PANTHER" id="PTHR35863:SF1">
    <property type="entry name" value="COBALT-PRECORRIN-5B C(1)-METHYLTRANSFERASE"/>
    <property type="match status" value="1"/>
</dbReference>
<dbReference type="Pfam" id="PF01888">
    <property type="entry name" value="CbiD"/>
    <property type="match status" value="1"/>
</dbReference>
<dbReference type="PIRSF" id="PIRSF026782">
    <property type="entry name" value="CbiD"/>
    <property type="match status" value="1"/>
</dbReference>
<dbReference type="SUPFAM" id="SSF111342">
    <property type="entry name" value="CbiD-like"/>
    <property type="match status" value="1"/>
</dbReference>
<keyword id="KW-0169">Cobalamin biosynthesis</keyword>
<keyword id="KW-0489">Methyltransferase</keyword>
<keyword id="KW-0949">S-adenosyl-L-methionine</keyword>
<keyword id="KW-0808">Transferase</keyword>
<protein>
    <recommendedName>
        <fullName evidence="1">Cobalt-precorrin-5B C(1)-methyltransferase</fullName>
        <ecNumber evidence="1">2.1.1.195</ecNumber>
    </recommendedName>
    <alternativeName>
        <fullName evidence="1">Cobalt-precorrin-6A synthase</fullName>
    </alternativeName>
</protein>
<name>CBID_PROM3</name>
<accession>A2C5P1</accession>
<organism>
    <name type="scientific">Prochlorococcus marinus (strain MIT 9303)</name>
    <dbReference type="NCBI Taxonomy" id="59922"/>
    <lineage>
        <taxon>Bacteria</taxon>
        <taxon>Bacillati</taxon>
        <taxon>Cyanobacteriota</taxon>
        <taxon>Cyanophyceae</taxon>
        <taxon>Synechococcales</taxon>
        <taxon>Prochlorococcaceae</taxon>
        <taxon>Prochlorococcus</taxon>
    </lineage>
</organism>
<evidence type="ECO:0000255" key="1">
    <source>
        <dbReference type="HAMAP-Rule" id="MF_00787"/>
    </source>
</evidence>